<reference key="1">
    <citation type="journal article" date="2004" name="Nat. Genet.">
        <title>Evidence in the Legionella pneumophila genome for exploitation of host cell functions and high genome plasticity.</title>
        <authorList>
            <person name="Cazalet C."/>
            <person name="Rusniok C."/>
            <person name="Brueggemann H."/>
            <person name="Zidane N."/>
            <person name="Magnier A."/>
            <person name="Ma L."/>
            <person name="Tichit M."/>
            <person name="Jarraud S."/>
            <person name="Bouchier C."/>
            <person name="Vandenesch F."/>
            <person name="Kunst F."/>
            <person name="Etienne J."/>
            <person name="Glaser P."/>
            <person name="Buchrieser C."/>
        </authorList>
    </citation>
    <scope>NUCLEOTIDE SEQUENCE [LARGE SCALE GENOMIC DNA]</scope>
    <source>
        <strain>Lens</strain>
    </source>
</reference>
<accession>Q5WXZ5</accession>
<organism>
    <name type="scientific">Legionella pneumophila (strain Lens)</name>
    <dbReference type="NCBI Taxonomy" id="297245"/>
    <lineage>
        <taxon>Bacteria</taxon>
        <taxon>Pseudomonadati</taxon>
        <taxon>Pseudomonadota</taxon>
        <taxon>Gammaproteobacteria</taxon>
        <taxon>Legionellales</taxon>
        <taxon>Legionellaceae</taxon>
        <taxon>Legionella</taxon>
    </lineage>
</organism>
<keyword id="KW-0963">Cytoplasm</keyword>
<keyword id="KW-0238">DNA-binding</keyword>
<keyword id="KW-0677">Repeat</keyword>
<keyword id="KW-0804">Transcription</keyword>
<keyword id="KW-0805">Transcription regulation</keyword>
<sequence>MFRGINAITIDTKGRLAIPTRYRSALGAEDKIPLVVTIDTEETCLLLYTAAQWQIIEDNLQKLPSFNAAARRIQRLLIGHATDVEVDANGRVLLPTVLRNYAKLEKDVVMIGQGNKFEVWNKELWESKREQWLAEEASMTDGLPEEMKTFSL</sequence>
<evidence type="ECO:0000255" key="1">
    <source>
        <dbReference type="HAMAP-Rule" id="MF_01008"/>
    </source>
</evidence>
<evidence type="ECO:0000255" key="2">
    <source>
        <dbReference type="PROSITE-ProRule" id="PRU01076"/>
    </source>
</evidence>
<gene>
    <name evidence="1" type="primary">mraZ</name>
    <name type="ordered locus">lpl0944</name>
</gene>
<comment type="subunit">
    <text evidence="1">Forms oligomers.</text>
</comment>
<comment type="subcellular location">
    <subcellularLocation>
        <location evidence="1">Cytoplasm</location>
        <location evidence="1">Nucleoid</location>
    </subcellularLocation>
</comment>
<comment type="similarity">
    <text evidence="1">Belongs to the MraZ family.</text>
</comment>
<dbReference type="EMBL" id="CR628337">
    <property type="protein sequence ID" value="CAH15178.1"/>
    <property type="molecule type" value="Genomic_DNA"/>
</dbReference>
<dbReference type="RefSeq" id="WP_011213343.1">
    <property type="nucleotide sequence ID" value="NC_006369.1"/>
</dbReference>
<dbReference type="SMR" id="Q5WXZ5"/>
<dbReference type="GeneID" id="57034901"/>
<dbReference type="KEGG" id="lpf:lpl0944"/>
<dbReference type="LegioList" id="lpl0944"/>
<dbReference type="HOGENOM" id="CLU_107907_2_0_6"/>
<dbReference type="Proteomes" id="UP000002517">
    <property type="component" value="Chromosome"/>
</dbReference>
<dbReference type="GO" id="GO:0005737">
    <property type="term" value="C:cytoplasm"/>
    <property type="evidence" value="ECO:0007669"/>
    <property type="project" value="UniProtKB-UniRule"/>
</dbReference>
<dbReference type="GO" id="GO:0009295">
    <property type="term" value="C:nucleoid"/>
    <property type="evidence" value="ECO:0007669"/>
    <property type="project" value="UniProtKB-SubCell"/>
</dbReference>
<dbReference type="GO" id="GO:0003700">
    <property type="term" value="F:DNA-binding transcription factor activity"/>
    <property type="evidence" value="ECO:0007669"/>
    <property type="project" value="UniProtKB-UniRule"/>
</dbReference>
<dbReference type="GO" id="GO:0000976">
    <property type="term" value="F:transcription cis-regulatory region binding"/>
    <property type="evidence" value="ECO:0007669"/>
    <property type="project" value="TreeGrafter"/>
</dbReference>
<dbReference type="GO" id="GO:2000143">
    <property type="term" value="P:negative regulation of DNA-templated transcription initiation"/>
    <property type="evidence" value="ECO:0007669"/>
    <property type="project" value="TreeGrafter"/>
</dbReference>
<dbReference type="CDD" id="cd16321">
    <property type="entry name" value="MraZ_C"/>
    <property type="match status" value="1"/>
</dbReference>
<dbReference type="CDD" id="cd16320">
    <property type="entry name" value="MraZ_N"/>
    <property type="match status" value="1"/>
</dbReference>
<dbReference type="Gene3D" id="3.40.1550.20">
    <property type="entry name" value="Transcriptional regulator MraZ domain"/>
    <property type="match status" value="1"/>
</dbReference>
<dbReference type="HAMAP" id="MF_01008">
    <property type="entry name" value="MraZ"/>
    <property type="match status" value="1"/>
</dbReference>
<dbReference type="InterPro" id="IPR003444">
    <property type="entry name" value="MraZ"/>
</dbReference>
<dbReference type="InterPro" id="IPR035644">
    <property type="entry name" value="MraZ_C"/>
</dbReference>
<dbReference type="InterPro" id="IPR020603">
    <property type="entry name" value="MraZ_dom"/>
</dbReference>
<dbReference type="InterPro" id="IPR035642">
    <property type="entry name" value="MraZ_N"/>
</dbReference>
<dbReference type="InterPro" id="IPR038619">
    <property type="entry name" value="MraZ_sf"/>
</dbReference>
<dbReference type="InterPro" id="IPR007159">
    <property type="entry name" value="SpoVT-AbrB_dom"/>
</dbReference>
<dbReference type="InterPro" id="IPR037914">
    <property type="entry name" value="SpoVT-AbrB_sf"/>
</dbReference>
<dbReference type="NCBIfam" id="TIGR00242">
    <property type="entry name" value="division/cell wall cluster transcriptional repressor MraZ"/>
    <property type="match status" value="1"/>
</dbReference>
<dbReference type="PANTHER" id="PTHR34701">
    <property type="entry name" value="TRANSCRIPTIONAL REGULATOR MRAZ"/>
    <property type="match status" value="1"/>
</dbReference>
<dbReference type="PANTHER" id="PTHR34701:SF1">
    <property type="entry name" value="TRANSCRIPTIONAL REGULATOR MRAZ"/>
    <property type="match status" value="1"/>
</dbReference>
<dbReference type="Pfam" id="PF02381">
    <property type="entry name" value="MraZ"/>
    <property type="match status" value="2"/>
</dbReference>
<dbReference type="SUPFAM" id="SSF89447">
    <property type="entry name" value="AbrB/MazE/MraZ-like"/>
    <property type="match status" value="1"/>
</dbReference>
<dbReference type="PROSITE" id="PS51740">
    <property type="entry name" value="SPOVT_ABRB"/>
    <property type="match status" value="2"/>
</dbReference>
<proteinExistence type="inferred from homology"/>
<name>MRAZ_LEGPL</name>
<protein>
    <recommendedName>
        <fullName>Transcriptional regulator MraZ</fullName>
    </recommendedName>
</protein>
<feature type="chain" id="PRO_0000108493" description="Transcriptional regulator MraZ">
    <location>
        <begin position="1"/>
        <end position="152"/>
    </location>
</feature>
<feature type="domain" description="SpoVT-AbrB 1" evidence="2">
    <location>
        <begin position="5"/>
        <end position="52"/>
    </location>
</feature>
<feature type="domain" description="SpoVT-AbrB 2" evidence="2">
    <location>
        <begin position="81"/>
        <end position="124"/>
    </location>
</feature>